<accession>B3PII1</accession>
<organism>
    <name type="scientific">Cellvibrio japonicus (strain Ueda107)</name>
    <name type="common">Pseudomonas fluorescens subsp. cellulosa</name>
    <dbReference type="NCBI Taxonomy" id="498211"/>
    <lineage>
        <taxon>Bacteria</taxon>
        <taxon>Pseudomonadati</taxon>
        <taxon>Pseudomonadota</taxon>
        <taxon>Gammaproteobacteria</taxon>
        <taxon>Cellvibrionales</taxon>
        <taxon>Cellvibrionaceae</taxon>
        <taxon>Cellvibrio</taxon>
    </lineage>
</organism>
<comment type="function">
    <text evidence="2">With CysD forms the ATP sulfurylase (ATPS) that catalyzes the adenylation of sulfate producing adenosine 5'-phosphosulfate (APS) and diphosphate, the first enzymatic step in sulfur assimilation pathway. APS synthesis involves the formation of a high-energy phosphoric-sulfuric acid anhydride bond driven by GTP hydrolysis by CysN coupled to ATP hydrolysis by CysD.</text>
</comment>
<comment type="catalytic activity">
    <reaction evidence="2">
        <text>sulfate + ATP + H(+) = adenosine 5'-phosphosulfate + diphosphate</text>
        <dbReference type="Rhea" id="RHEA:18133"/>
        <dbReference type="ChEBI" id="CHEBI:15378"/>
        <dbReference type="ChEBI" id="CHEBI:16189"/>
        <dbReference type="ChEBI" id="CHEBI:30616"/>
        <dbReference type="ChEBI" id="CHEBI:33019"/>
        <dbReference type="ChEBI" id="CHEBI:58243"/>
        <dbReference type="EC" id="2.7.7.4"/>
    </reaction>
</comment>
<comment type="pathway">
    <text evidence="2">Sulfur metabolism; hydrogen sulfide biosynthesis; sulfite from sulfate: step 1/3.</text>
</comment>
<comment type="subunit">
    <text evidence="2">Heterodimer composed of CysD, the smaller subunit, and CysN.</text>
</comment>
<comment type="similarity">
    <text evidence="2">Belongs to the TRAFAC class translation factor GTPase superfamily. Classic translation factor GTPase family. CysN/NodQ subfamily.</text>
</comment>
<dbReference type="EC" id="2.7.7.4" evidence="2"/>
<dbReference type="EMBL" id="CP000934">
    <property type="protein sequence ID" value="ACE82740.1"/>
    <property type="molecule type" value="Genomic_DNA"/>
</dbReference>
<dbReference type="RefSeq" id="WP_012487723.1">
    <property type="nucleotide sequence ID" value="NC_010995.1"/>
</dbReference>
<dbReference type="SMR" id="B3PII1"/>
<dbReference type="STRING" id="498211.CJA_2121"/>
<dbReference type="KEGG" id="cja:CJA_2121"/>
<dbReference type="eggNOG" id="COG2895">
    <property type="taxonomic scope" value="Bacteria"/>
</dbReference>
<dbReference type="HOGENOM" id="CLU_007265_5_2_6"/>
<dbReference type="OrthoDB" id="9804504at2"/>
<dbReference type="UniPathway" id="UPA00140">
    <property type="reaction ID" value="UER00204"/>
</dbReference>
<dbReference type="Proteomes" id="UP000001036">
    <property type="component" value="Chromosome"/>
</dbReference>
<dbReference type="GO" id="GO:0005524">
    <property type="term" value="F:ATP binding"/>
    <property type="evidence" value="ECO:0007669"/>
    <property type="project" value="UniProtKB-KW"/>
</dbReference>
<dbReference type="GO" id="GO:0005525">
    <property type="term" value="F:GTP binding"/>
    <property type="evidence" value="ECO:0007669"/>
    <property type="project" value="UniProtKB-UniRule"/>
</dbReference>
<dbReference type="GO" id="GO:0003924">
    <property type="term" value="F:GTPase activity"/>
    <property type="evidence" value="ECO:0007669"/>
    <property type="project" value="InterPro"/>
</dbReference>
<dbReference type="GO" id="GO:0097216">
    <property type="term" value="F:guanosine tetraphosphate binding"/>
    <property type="evidence" value="ECO:0007669"/>
    <property type="project" value="UniProtKB-ARBA"/>
</dbReference>
<dbReference type="GO" id="GO:0004781">
    <property type="term" value="F:sulfate adenylyltransferase (ATP) activity"/>
    <property type="evidence" value="ECO:0007669"/>
    <property type="project" value="UniProtKB-UniRule"/>
</dbReference>
<dbReference type="GO" id="GO:0070814">
    <property type="term" value="P:hydrogen sulfide biosynthetic process"/>
    <property type="evidence" value="ECO:0007669"/>
    <property type="project" value="UniProtKB-UniRule"/>
</dbReference>
<dbReference type="GO" id="GO:0000103">
    <property type="term" value="P:sulfate assimilation"/>
    <property type="evidence" value="ECO:0007669"/>
    <property type="project" value="UniProtKB-UniRule"/>
</dbReference>
<dbReference type="CDD" id="cd04166">
    <property type="entry name" value="CysN_ATPS"/>
    <property type="match status" value="1"/>
</dbReference>
<dbReference type="CDD" id="cd03695">
    <property type="entry name" value="CysN_NodQ_II"/>
    <property type="match status" value="1"/>
</dbReference>
<dbReference type="CDD" id="cd04095">
    <property type="entry name" value="CysN_NoDQ_III"/>
    <property type="match status" value="1"/>
</dbReference>
<dbReference type="FunFam" id="2.40.30.10:FF:000027">
    <property type="entry name" value="Sulfate adenylyltransferase subunit 1"/>
    <property type="match status" value="1"/>
</dbReference>
<dbReference type="FunFam" id="3.40.50.300:FF:000119">
    <property type="entry name" value="Sulfate adenylyltransferase subunit 1"/>
    <property type="match status" value="1"/>
</dbReference>
<dbReference type="Gene3D" id="3.40.50.300">
    <property type="entry name" value="P-loop containing nucleotide triphosphate hydrolases"/>
    <property type="match status" value="1"/>
</dbReference>
<dbReference type="Gene3D" id="2.40.30.10">
    <property type="entry name" value="Translation factors"/>
    <property type="match status" value="2"/>
</dbReference>
<dbReference type="HAMAP" id="MF_00062">
    <property type="entry name" value="Sulf_adenylyltr_sub1"/>
    <property type="match status" value="1"/>
</dbReference>
<dbReference type="InterPro" id="IPR041757">
    <property type="entry name" value="CysN_GTP-bd"/>
</dbReference>
<dbReference type="InterPro" id="IPR044138">
    <property type="entry name" value="CysN_II"/>
</dbReference>
<dbReference type="InterPro" id="IPR044139">
    <property type="entry name" value="CysN_NoDQ_III"/>
</dbReference>
<dbReference type="InterPro" id="IPR004161">
    <property type="entry name" value="EFTu-like_2"/>
</dbReference>
<dbReference type="InterPro" id="IPR031157">
    <property type="entry name" value="G_TR_CS"/>
</dbReference>
<dbReference type="InterPro" id="IPR054696">
    <property type="entry name" value="GTP-eEF1A_C"/>
</dbReference>
<dbReference type="InterPro" id="IPR027417">
    <property type="entry name" value="P-loop_NTPase"/>
</dbReference>
<dbReference type="InterPro" id="IPR005225">
    <property type="entry name" value="Small_GTP-bd"/>
</dbReference>
<dbReference type="InterPro" id="IPR011779">
    <property type="entry name" value="SO4_adenylTrfase_lsu"/>
</dbReference>
<dbReference type="InterPro" id="IPR000795">
    <property type="entry name" value="T_Tr_GTP-bd_dom"/>
</dbReference>
<dbReference type="InterPro" id="IPR050100">
    <property type="entry name" value="TRAFAC_GTPase_members"/>
</dbReference>
<dbReference type="InterPro" id="IPR009000">
    <property type="entry name" value="Transl_B-barrel_sf"/>
</dbReference>
<dbReference type="InterPro" id="IPR009001">
    <property type="entry name" value="Transl_elong_EF1A/Init_IF2_C"/>
</dbReference>
<dbReference type="NCBIfam" id="TIGR02034">
    <property type="entry name" value="CysN"/>
    <property type="match status" value="1"/>
</dbReference>
<dbReference type="NCBIfam" id="NF003478">
    <property type="entry name" value="PRK05124.1"/>
    <property type="match status" value="1"/>
</dbReference>
<dbReference type="NCBIfam" id="NF004035">
    <property type="entry name" value="PRK05506.1"/>
    <property type="match status" value="1"/>
</dbReference>
<dbReference type="NCBIfam" id="TIGR00231">
    <property type="entry name" value="small_GTP"/>
    <property type="match status" value="1"/>
</dbReference>
<dbReference type="PANTHER" id="PTHR23115">
    <property type="entry name" value="TRANSLATION FACTOR"/>
    <property type="match status" value="1"/>
</dbReference>
<dbReference type="Pfam" id="PF22594">
    <property type="entry name" value="GTP-eEF1A_C"/>
    <property type="match status" value="1"/>
</dbReference>
<dbReference type="Pfam" id="PF00009">
    <property type="entry name" value="GTP_EFTU"/>
    <property type="match status" value="1"/>
</dbReference>
<dbReference type="Pfam" id="PF03144">
    <property type="entry name" value="GTP_EFTU_D2"/>
    <property type="match status" value="1"/>
</dbReference>
<dbReference type="PRINTS" id="PR00315">
    <property type="entry name" value="ELONGATNFCT"/>
</dbReference>
<dbReference type="SUPFAM" id="SSF50465">
    <property type="entry name" value="EF-Tu/eEF-1alpha/eIF2-gamma C-terminal domain"/>
    <property type="match status" value="1"/>
</dbReference>
<dbReference type="SUPFAM" id="SSF52540">
    <property type="entry name" value="P-loop containing nucleoside triphosphate hydrolases"/>
    <property type="match status" value="1"/>
</dbReference>
<dbReference type="SUPFAM" id="SSF50447">
    <property type="entry name" value="Translation proteins"/>
    <property type="match status" value="1"/>
</dbReference>
<dbReference type="PROSITE" id="PS00301">
    <property type="entry name" value="G_TR_1"/>
    <property type="match status" value="1"/>
</dbReference>
<dbReference type="PROSITE" id="PS51722">
    <property type="entry name" value="G_TR_2"/>
    <property type="match status" value="1"/>
</dbReference>
<protein>
    <recommendedName>
        <fullName evidence="2">Sulfate adenylyltransferase subunit 1</fullName>
        <ecNumber evidence="2">2.7.7.4</ecNumber>
    </recommendedName>
    <alternativeName>
        <fullName evidence="2">ATP-sulfurylase large subunit</fullName>
    </alternativeName>
    <alternativeName>
        <fullName evidence="2">Sulfate adenylate transferase</fullName>
        <shortName evidence="2">SAT</shortName>
    </alternativeName>
</protein>
<keyword id="KW-0067">ATP-binding</keyword>
<keyword id="KW-0342">GTP-binding</keyword>
<keyword id="KW-0547">Nucleotide-binding</keyword>
<keyword id="KW-0548">Nucleotidyltransferase</keyword>
<keyword id="KW-1185">Reference proteome</keyword>
<keyword id="KW-0808">Transferase</keyword>
<gene>
    <name evidence="2" type="primary">cysN</name>
    <name type="ordered locus">CJA_2121</name>
</gene>
<feature type="chain" id="PRO_1000092135" description="Sulfate adenylyltransferase subunit 1">
    <location>
        <begin position="1"/>
        <end position="472"/>
    </location>
</feature>
<feature type="domain" description="tr-type G">
    <location>
        <begin position="22"/>
        <end position="239"/>
    </location>
</feature>
<feature type="region of interest" description="G1" evidence="1">
    <location>
        <begin position="31"/>
        <end position="38"/>
    </location>
</feature>
<feature type="region of interest" description="G2" evidence="1">
    <location>
        <begin position="89"/>
        <end position="93"/>
    </location>
</feature>
<feature type="region of interest" description="G3" evidence="1">
    <location>
        <begin position="110"/>
        <end position="113"/>
    </location>
</feature>
<feature type="region of interest" description="G4" evidence="1">
    <location>
        <begin position="165"/>
        <end position="168"/>
    </location>
</feature>
<feature type="region of interest" description="G5" evidence="1">
    <location>
        <begin position="202"/>
        <end position="204"/>
    </location>
</feature>
<feature type="binding site" evidence="2">
    <location>
        <begin position="31"/>
        <end position="38"/>
    </location>
    <ligand>
        <name>GTP</name>
        <dbReference type="ChEBI" id="CHEBI:37565"/>
    </ligand>
</feature>
<feature type="binding site" evidence="2">
    <location>
        <begin position="110"/>
        <end position="114"/>
    </location>
    <ligand>
        <name>GTP</name>
        <dbReference type="ChEBI" id="CHEBI:37565"/>
    </ligand>
</feature>
<feature type="binding site" evidence="2">
    <location>
        <begin position="165"/>
        <end position="168"/>
    </location>
    <ligand>
        <name>GTP</name>
        <dbReference type="ChEBI" id="CHEBI:37565"/>
    </ligand>
</feature>
<sequence>MSHQSELIAQDINAYLAQHEKKELLRFLTCGSVDDGKSTLIGRLLHDSKMIYEDQLEAVRADSSKHGTTGEKIDLALLVDGLQAEREQGITIDVAYRYFSTSKRKFIIADTPGHEQYTRNMATGASTCDLAIILIDARHGVMTQTRRHSYIASLLGIKHIVVAINKMDLLDFNESVFENIKADYLAFAAKLGMKDVMFVPISALDGDNVVNRSEKSAWYKGQTLMEILETVPIAGDKNYTDFRFPVQYVNRPNLDFRGFCGNVASGVVKVGDEVRVLPSGKTSHVKSIVTYDANLDEAFTGQAVTLTLTDEVDISRGDMLVLARDQVPQSNHVRAHLVWMTEKFMQPGSEYLFKFASKLVSGQIESIGYRVDVNTQEHSQVTHLQLNDIALVDVLLTQSVVADKYQQNRATGAFIVVDRLTNITVGAGMVVEQLQAEQTTPVNYSEFELELNALVRKHFPHWGAADLRKLLK</sequence>
<evidence type="ECO:0000250" key="1"/>
<evidence type="ECO:0000255" key="2">
    <source>
        <dbReference type="HAMAP-Rule" id="MF_00062"/>
    </source>
</evidence>
<name>CYSN_CELJU</name>
<proteinExistence type="inferred from homology"/>
<reference key="1">
    <citation type="journal article" date="2008" name="J. Bacteriol.">
        <title>Insights into plant cell wall degradation from the genome sequence of the soil bacterium Cellvibrio japonicus.</title>
        <authorList>
            <person name="DeBoy R.T."/>
            <person name="Mongodin E.F."/>
            <person name="Fouts D.E."/>
            <person name="Tailford L.E."/>
            <person name="Khouri H."/>
            <person name="Emerson J.B."/>
            <person name="Mohamoud Y."/>
            <person name="Watkins K."/>
            <person name="Henrissat B."/>
            <person name="Gilbert H.J."/>
            <person name="Nelson K.E."/>
        </authorList>
    </citation>
    <scope>NUCLEOTIDE SEQUENCE [LARGE SCALE GENOMIC DNA]</scope>
    <source>
        <strain>Ueda107</strain>
    </source>
</reference>